<organism>
    <name type="scientific">Pyrococcus furiosus (strain ATCC 43587 / DSM 3638 / JCM 8422 / Vc1)</name>
    <dbReference type="NCBI Taxonomy" id="186497"/>
    <lineage>
        <taxon>Archaea</taxon>
        <taxon>Methanobacteriati</taxon>
        <taxon>Methanobacteriota</taxon>
        <taxon>Thermococci</taxon>
        <taxon>Thermococcales</taxon>
        <taxon>Thermococcaceae</taxon>
        <taxon>Pyrococcus</taxon>
    </lineage>
</organism>
<comment type="function">
    <text evidence="4 5 6">Part of a bifunctional enzyme complex that functions as a hydrogen-evolving hydrogenase with sulfur-reducing activity. May play a role in hydrogen cycling during fermentative growth. Activity exhibited with NAD in addition to NADPH. The alpha and delta subunits form the hydrogenase component that catalyzes the reduction of protons to evolve hydrogen.</text>
</comment>
<comment type="catalytic activity">
    <reaction evidence="4 6">
        <text>H2 + NADP(+) = NADPH + H(+)</text>
        <dbReference type="Rhea" id="RHEA:18637"/>
        <dbReference type="ChEBI" id="CHEBI:15378"/>
        <dbReference type="ChEBI" id="CHEBI:18276"/>
        <dbReference type="ChEBI" id="CHEBI:57783"/>
        <dbReference type="ChEBI" id="CHEBI:58349"/>
        <dbReference type="EC" id="1.12.1.5"/>
    </reaction>
</comment>
<comment type="catalytic activity">
    <reaction evidence="4 6">
        <text>H2 + NAD(+) = NADH + H(+)</text>
        <dbReference type="Rhea" id="RHEA:24636"/>
        <dbReference type="ChEBI" id="CHEBI:15378"/>
        <dbReference type="ChEBI" id="CHEBI:18276"/>
        <dbReference type="ChEBI" id="CHEBI:57540"/>
        <dbReference type="ChEBI" id="CHEBI:57945"/>
        <dbReference type="EC" id="1.12.1.5"/>
    </reaction>
</comment>
<comment type="cofactor">
    <cofactor evidence="4">
        <name>Ni(2+)</name>
        <dbReference type="ChEBI" id="CHEBI:49786"/>
    </cofactor>
    <text evidence="4">Binds 1 nickel ion per subunit.</text>
</comment>
<comment type="cofactor">
    <cofactor evidence="1">
        <name>Fe cation</name>
        <dbReference type="ChEBI" id="CHEBI:24875"/>
    </cofactor>
</comment>
<comment type="biophysicochemical properties">
    <kinetics>
        <KM evidence="4">1.25 mM for methyl viologen (sodium dithionate and H(+) as cosubstrates)</KM>
        <KM evidence="4">1 mM for methyl viologen (H(2) as cosubstrate)</KM>
        <KM evidence="4">0.13 mM for H(2) (methyl viologen as cosubstrate)</KM>
        <KM evidence="4">63 uM for NADPH (H(+) as cosubstrate)</KM>
        <KM evidence="4">71 uM for NADH (H(+) as cosubstrate)</KM>
        <KM evidence="4">17 uM for NADP (H(2) as cosubstrate)</KM>
        <KM evidence="4">125 uM for NAD (H(2) as cosubstrate)</KM>
        <KM evidence="4">0.2 mM for sulfur (H(2) as cosubstrate)</KM>
        <KM evidence="4">0.67 mM for polysulfide (NADPH as cosubstrate)</KM>
        <text evidence="4">Measured for the whole complex.</text>
    </kinetics>
    <phDependence>
        <text evidence="4">Optimum pH is 8 for hydrogenase activity at &gt;95 degrees Celsius.</text>
    </phDependence>
    <temperatureDependence>
        <text evidence="4">Optimum temperature is greater than 90 degrees Celsius. Activity increases with increasing temperature from 30 degrees Celsius to 90 degrees Celsius. Has a half-life of 6 hours at 95 degrees Celsius.</text>
    </temperatureDependence>
</comment>
<comment type="subunit">
    <text evidence="4 6">Dimer of heterotetramer of alpha, beta, gamma and delta subunits. The nickel-containing alpha and delta subunits constitute the hydrogenase activity. The beta and gamma subunits (flavin-containing dimer) constitute the sulfur reductase activity.</text>
</comment>
<comment type="subcellular location">
    <subcellularLocation>
        <location evidence="4">Cytoplasm</location>
    </subcellularLocation>
</comment>
<comment type="similarity">
    <text evidence="3">Belongs to the [NiFe]/[NiFeSe] hydrogenase large subunit family.</text>
</comment>
<reference evidence="8 9" key="1">
    <citation type="journal article" date="2000" name="J. Bacteriol.">
        <title>Characterization of hydrogenase II from the hyperthermophilic archaeon Pyrococcus furiosus and assessment of its role in sulfur reduction.</title>
        <authorList>
            <person name="Ma K."/>
            <person name="Weiss R."/>
            <person name="Adams M.W."/>
        </authorList>
    </citation>
    <scope>NUCLEOTIDE SEQUENCE [GENOMIC DNA]</scope>
    <scope>PROTEIN SEQUENCE OF 1-20</scope>
    <scope>FUNCTION</scope>
    <scope>CATALYTIC ACTIVITY</scope>
    <scope>COFACTOR</scope>
    <scope>BIOPHYSICOCHEMICAL PROPERTIES</scope>
    <scope>SUBCELLULAR LOCATION</scope>
    <scope>SUBUNIT</scope>
    <scope>EPR SPECTROSCOPY</scope>
    <source>
        <strain evidence="9">ATCC 43587 / DSM 3638 / JCM 8422 / Vc1</strain>
    </source>
</reference>
<reference evidence="10" key="2">
    <citation type="journal article" date="1999" name="Genetics">
        <title>Divergence of the hyperthermophilic archaea Pyrococcus furiosus and P. horikoshii inferred from complete genomic sequences.</title>
        <authorList>
            <person name="Maeder D.L."/>
            <person name="Weiss R.B."/>
            <person name="Dunn D.M."/>
            <person name="Cherry J.L."/>
            <person name="Gonzalez J.M."/>
            <person name="DiRuggiero J."/>
            <person name="Robb F.T."/>
        </authorList>
    </citation>
    <scope>NUCLEOTIDE SEQUENCE [LARGE SCALE GENOMIC DNA]</scope>
    <source>
        <strain>ATCC 43587 / DSM 3638 / JCM 8422 / Vc1</strain>
    </source>
</reference>
<reference evidence="8" key="3">
    <citation type="journal article" date="2001" name="J. Bacteriol.">
        <title>Key role for sulfur in peptide metabolism and in regulation of three hydrogenases in the hyperthermophilic archaeon Pyrococcus furiosus.</title>
        <authorList>
            <person name="Adams M.W."/>
            <person name="Holden J.F."/>
            <person name="Menon A.L."/>
            <person name="Schut G.J."/>
            <person name="Grunden A.M."/>
            <person name="Hou C."/>
            <person name="Hutchins A.M."/>
            <person name="Jenney F.E. Jr."/>
            <person name="Kim C."/>
            <person name="Ma K."/>
            <person name="Pan G."/>
            <person name="Roy R."/>
            <person name="Sapra R."/>
            <person name="Story S.V."/>
            <person name="Verhagen M.F."/>
        </authorList>
    </citation>
    <scope>FUNCTION</scope>
    <source>
        <strain evidence="5">ATCC 43587 / DSM 3638 / JCM 8422 / Vc1</strain>
    </source>
</reference>
<reference evidence="8" key="4">
    <citation type="journal article" date="2001" name="Methods Enzymol.">
        <title>Hydrogenases I and II from Pyrococcus furiosus.</title>
        <authorList>
            <person name="Ma K."/>
            <person name="Adams M.W."/>
        </authorList>
    </citation>
    <scope>FUNCTION</scope>
    <scope>CATALYTIC ACTIVITY</scope>
    <scope>SUBUNIT</scope>
    <source>
        <strain evidence="6">ATCC 43587 / DSM 3638 / JCM 8422 / Vc1</strain>
    </source>
</reference>
<protein>
    <recommendedName>
        <fullName>Sulfhydrogenase 2 subunit alpha</fullName>
        <ecNumber>1.12.1.5</ecNumber>
    </recommendedName>
    <alternativeName>
        <fullName>Hydrogen dehydrogenase (NAD(P)(+))</fullName>
    </alternativeName>
    <alternativeName>
        <fullName evidence="7">Hydrogenase-II subunit alpha</fullName>
        <shortName evidence="7">H-II alpha</shortName>
    </alternativeName>
    <alternativeName>
        <fullName>NADP-reducing hydrogenase subunit ShyA</fullName>
    </alternativeName>
    <alternativeName>
        <fullName evidence="7">Sulfhydrogenase II subunit alpha</fullName>
    </alternativeName>
</protein>
<gene>
    <name evidence="9" type="primary">shyA</name>
    <name type="ordered locus">PF1332</name>
</gene>
<accession>E7FHC4</accession>
<accession>Q7LWY6</accession>
<accession>Q9P9M4</accession>
<sequence length="412" mass="46180">MIIELDEFTRVEGNGKAEIVIENGEVKDARVKIVEGPRFFEILTLGRDYWDVPDLEARICAICYIAHSVASVRAIEKALGIDVPESVEKLRELALWGEIIESHALHLYLLALPDVFGYPDAISMIPRHGELVKEGLTIKAFGNAIRELIGGREIHGINIKPGGFGRYPSEEELEKIAEHSKSLIKFARRIVGIFASQEAGGAVGEVLMATSDYLWGDELIINGERVQYYEVDEVPVGYSFAKHSYYKGNPVFVGALPRLLLKGESIEGEAARMLEEYRDKLESKYVIYNNLAQAIELLYALERVPQLVEEILSEGIERGNGEISQESGEGVGYVEAPRGVLVHHYRIENGKVVWSNTITPTAFNQRLMELSLLEEAKRLYGSESEENMKKRLEVIVRAFDPCISCSVHFVKL</sequence>
<proteinExistence type="evidence at protein level"/>
<feature type="chain" id="PRO_0000420725" description="Sulfhydrogenase 2 subunit alpha">
    <location>
        <begin position="1"/>
        <end position="412"/>
    </location>
</feature>
<feature type="binding site" evidence="2">
    <location>
        <position position="60"/>
    </location>
    <ligand>
        <name>Ni(2+)</name>
        <dbReference type="ChEBI" id="CHEBI:49786"/>
    </ligand>
</feature>
<feature type="binding site" evidence="2">
    <location>
        <position position="63"/>
    </location>
    <ligand>
        <name>Fe cation</name>
        <dbReference type="ChEBI" id="CHEBI:24875"/>
    </ligand>
</feature>
<feature type="binding site" evidence="2">
    <location>
        <position position="63"/>
    </location>
    <ligand>
        <name>Ni(2+)</name>
        <dbReference type="ChEBI" id="CHEBI:49786"/>
    </ligand>
</feature>
<feature type="binding site" evidence="2">
    <location>
        <position position="402"/>
    </location>
    <ligand>
        <name>Ni(2+)</name>
        <dbReference type="ChEBI" id="CHEBI:49786"/>
    </ligand>
</feature>
<feature type="binding site" evidence="2">
    <location>
        <position position="405"/>
    </location>
    <ligand>
        <name>Fe cation</name>
        <dbReference type="ChEBI" id="CHEBI:24875"/>
    </ligand>
</feature>
<feature type="binding site" evidence="2">
    <location>
        <position position="405"/>
    </location>
    <ligand>
        <name>Ni(2+)</name>
        <dbReference type="ChEBI" id="CHEBI:49786"/>
    </ligand>
</feature>
<keyword id="KW-0963">Cytoplasm</keyword>
<keyword id="KW-0903">Direct protein sequencing</keyword>
<keyword id="KW-0408">Iron</keyword>
<keyword id="KW-0479">Metal-binding</keyword>
<keyword id="KW-0520">NAD</keyword>
<keyword id="KW-0521">NADP</keyword>
<keyword id="KW-0533">Nickel</keyword>
<keyword id="KW-0560">Oxidoreductase</keyword>
<keyword id="KW-1185">Reference proteome</keyword>
<dbReference type="EC" id="1.12.1.5"/>
<dbReference type="EMBL" id="AF176650">
    <property type="protein sequence ID" value="AAF61854.1"/>
    <property type="molecule type" value="Genomic_DNA"/>
</dbReference>
<dbReference type="EMBL" id="AE009950">
    <property type="protein sequence ID" value="AAL81456.1"/>
    <property type="molecule type" value="Genomic_DNA"/>
</dbReference>
<dbReference type="RefSeq" id="WP_011012478.1">
    <property type="nucleotide sequence ID" value="NZ_CP023154.1"/>
</dbReference>
<dbReference type="SMR" id="E7FHC4"/>
<dbReference type="STRING" id="186497.PF1332"/>
<dbReference type="PaxDb" id="186497-PF1332"/>
<dbReference type="GeneID" id="41713135"/>
<dbReference type="KEGG" id="pfu:PF1332"/>
<dbReference type="PATRIC" id="fig|186497.12.peg.1395"/>
<dbReference type="eggNOG" id="arCOG01549">
    <property type="taxonomic scope" value="Archaea"/>
</dbReference>
<dbReference type="HOGENOM" id="CLU_044556_0_0_2"/>
<dbReference type="OrthoDB" id="42371at2157"/>
<dbReference type="PhylomeDB" id="E7FHC4"/>
<dbReference type="BioCyc" id="MetaCyc:MONOMER-17852"/>
<dbReference type="BRENDA" id="1.12.1.5">
    <property type="organism ID" value="5243"/>
</dbReference>
<dbReference type="BRENDA" id="1.12.98.4">
    <property type="organism ID" value="5243"/>
</dbReference>
<dbReference type="Proteomes" id="UP000001013">
    <property type="component" value="Chromosome"/>
</dbReference>
<dbReference type="GO" id="GO:0005737">
    <property type="term" value="C:cytoplasm"/>
    <property type="evidence" value="ECO:0007669"/>
    <property type="project" value="UniProtKB-SubCell"/>
</dbReference>
<dbReference type="GO" id="GO:0008901">
    <property type="term" value="F:ferredoxin hydrogenase activity"/>
    <property type="evidence" value="ECO:0007669"/>
    <property type="project" value="InterPro"/>
</dbReference>
<dbReference type="GO" id="GO:0050583">
    <property type="term" value="F:hydrogen dehydrogenase (NADP+) activity"/>
    <property type="evidence" value="ECO:0007669"/>
    <property type="project" value="RHEA"/>
</dbReference>
<dbReference type="GO" id="GO:0047985">
    <property type="term" value="F:hydrogen dehydrogenase activity"/>
    <property type="evidence" value="ECO:0007669"/>
    <property type="project" value="RHEA"/>
</dbReference>
<dbReference type="GO" id="GO:0016151">
    <property type="term" value="F:nickel cation binding"/>
    <property type="evidence" value="ECO:0007669"/>
    <property type="project" value="InterPro"/>
</dbReference>
<dbReference type="Gene3D" id="1.10.645.10">
    <property type="entry name" value="Cytochrome-c3 Hydrogenase, chain B"/>
    <property type="match status" value="1"/>
</dbReference>
<dbReference type="InterPro" id="IPR053626">
    <property type="entry name" value="Hydrogenase_lg_subunit"/>
</dbReference>
<dbReference type="InterPro" id="IPR001501">
    <property type="entry name" value="Ni-dep_hyd_lsu"/>
</dbReference>
<dbReference type="InterPro" id="IPR018194">
    <property type="entry name" value="Ni-dep_hyd_lsu_Ni_BS"/>
</dbReference>
<dbReference type="InterPro" id="IPR029014">
    <property type="entry name" value="NiFe-Hase_large"/>
</dbReference>
<dbReference type="NCBIfam" id="NF040828">
    <property type="entry name" value="sulfhyd_ShyA"/>
    <property type="match status" value="1"/>
</dbReference>
<dbReference type="PANTHER" id="PTHR43600">
    <property type="entry name" value="COENZYME F420 HYDROGENASE, SUBUNIT ALPHA"/>
    <property type="match status" value="1"/>
</dbReference>
<dbReference type="PANTHER" id="PTHR43600:SF4">
    <property type="entry name" value="CYTOSOLIC NIFE-HYDROGENASE, ALPHA SUBUNIT"/>
    <property type="match status" value="1"/>
</dbReference>
<dbReference type="Pfam" id="PF00374">
    <property type="entry name" value="NiFeSe_Hases"/>
    <property type="match status" value="2"/>
</dbReference>
<dbReference type="SUPFAM" id="SSF56762">
    <property type="entry name" value="HydB/Nqo4-like"/>
    <property type="match status" value="1"/>
</dbReference>
<dbReference type="PROSITE" id="PS00508">
    <property type="entry name" value="NI_HGENASE_L_2"/>
    <property type="match status" value="1"/>
</dbReference>
<name>HYD2A_PYRFU</name>
<evidence type="ECO:0000250" key="1"/>
<evidence type="ECO:0000250" key="2">
    <source>
        <dbReference type="UniProtKB" id="P21852"/>
    </source>
</evidence>
<evidence type="ECO:0000255" key="3"/>
<evidence type="ECO:0000269" key="4">
    <source>
    </source>
</evidence>
<evidence type="ECO:0000269" key="5">
    <source>
    </source>
</evidence>
<evidence type="ECO:0000269" key="6">
    <source>
    </source>
</evidence>
<evidence type="ECO:0000303" key="7">
    <source>
    </source>
</evidence>
<evidence type="ECO:0000305" key="8"/>
<evidence type="ECO:0000312" key="9">
    <source>
        <dbReference type="EMBL" id="AAF61854.1"/>
    </source>
</evidence>
<evidence type="ECO:0000312" key="10">
    <source>
        <dbReference type="EMBL" id="AAL81456.1"/>
    </source>
</evidence>